<sequence length="221" mass="23487">MEKKSCMILALDVSDREEALKIAEDVSEFVDAIKVGYPLILATGLGIIRELAEFAPIIADFKVADIPNTNRLICEHVFEAGTDAVIVQGFTGRDSLDACIEIASEYGKDVFVVSEMSHPGGAEFLQPVGEAIARMAAEAGAFGLVAPATRPERVTTIRKIIGNKLTIISPGVGAQGGKASDVIAAGADWVIVGRAIYKAESPREAARKIAAEIEAEFEQEN</sequence>
<name>PYRF_METBF</name>
<accession>Q46GE2</accession>
<protein>
    <recommendedName>
        <fullName evidence="1">Orotidine 5'-phosphate decarboxylase</fullName>
        <ecNumber evidence="1">4.1.1.23</ecNumber>
    </recommendedName>
    <alternativeName>
        <fullName evidence="1">OMP decarboxylase</fullName>
        <shortName evidence="1">OMPDCase</shortName>
        <shortName evidence="1">OMPdecase</shortName>
    </alternativeName>
</protein>
<organism>
    <name type="scientific">Methanosarcina barkeri (strain Fusaro / DSM 804)</name>
    <dbReference type="NCBI Taxonomy" id="269797"/>
    <lineage>
        <taxon>Archaea</taxon>
        <taxon>Methanobacteriati</taxon>
        <taxon>Methanobacteriota</taxon>
        <taxon>Stenosarchaea group</taxon>
        <taxon>Methanomicrobia</taxon>
        <taxon>Methanosarcinales</taxon>
        <taxon>Methanosarcinaceae</taxon>
        <taxon>Methanosarcina</taxon>
    </lineage>
</organism>
<gene>
    <name evidence="1" type="primary">pyrF</name>
    <name type="ordered locus">Mbar_A0060</name>
</gene>
<keyword id="KW-0210">Decarboxylase</keyword>
<keyword id="KW-0456">Lyase</keyword>
<keyword id="KW-0665">Pyrimidine biosynthesis</keyword>
<comment type="function">
    <text evidence="1">Catalyzes the decarboxylation of orotidine 5'-monophosphate (OMP) to uridine 5'-monophosphate (UMP).</text>
</comment>
<comment type="catalytic activity">
    <reaction evidence="1">
        <text>orotidine 5'-phosphate + H(+) = UMP + CO2</text>
        <dbReference type="Rhea" id="RHEA:11596"/>
        <dbReference type="ChEBI" id="CHEBI:15378"/>
        <dbReference type="ChEBI" id="CHEBI:16526"/>
        <dbReference type="ChEBI" id="CHEBI:57538"/>
        <dbReference type="ChEBI" id="CHEBI:57865"/>
        <dbReference type="EC" id="4.1.1.23"/>
    </reaction>
</comment>
<comment type="pathway">
    <text evidence="1">Pyrimidine metabolism; UMP biosynthesis via de novo pathway; UMP from orotate: step 2/2.</text>
</comment>
<comment type="subunit">
    <text evidence="1">Homodimer.</text>
</comment>
<comment type="similarity">
    <text evidence="1">Belongs to the OMP decarboxylase family. Type 1 subfamily.</text>
</comment>
<evidence type="ECO:0000255" key="1">
    <source>
        <dbReference type="HAMAP-Rule" id="MF_01200"/>
    </source>
</evidence>
<reference key="1">
    <citation type="journal article" date="2006" name="J. Bacteriol.">
        <title>The Methanosarcina barkeri genome: comparative analysis with Methanosarcina acetivorans and Methanosarcina mazei reveals extensive rearrangement within methanosarcinal genomes.</title>
        <authorList>
            <person name="Maeder D.L."/>
            <person name="Anderson I."/>
            <person name="Brettin T.S."/>
            <person name="Bruce D.C."/>
            <person name="Gilna P."/>
            <person name="Han C.S."/>
            <person name="Lapidus A."/>
            <person name="Metcalf W.W."/>
            <person name="Saunders E."/>
            <person name="Tapia R."/>
            <person name="Sowers K.R."/>
        </authorList>
    </citation>
    <scope>NUCLEOTIDE SEQUENCE [LARGE SCALE GENOMIC DNA]</scope>
    <source>
        <strain>Fusaro / DSM 804</strain>
    </source>
</reference>
<feature type="chain" id="PRO_0000241936" description="Orotidine 5'-phosphate decarboxylase">
    <location>
        <begin position="1"/>
        <end position="221"/>
    </location>
</feature>
<feature type="active site" description="Proton donor" evidence="1">
    <location>
        <position position="62"/>
    </location>
</feature>
<feature type="binding site" evidence="1">
    <location>
        <position position="12"/>
    </location>
    <ligand>
        <name>substrate</name>
    </ligand>
</feature>
<feature type="binding site" evidence="1">
    <location>
        <position position="34"/>
    </location>
    <ligand>
        <name>substrate</name>
    </ligand>
</feature>
<feature type="binding site" evidence="1">
    <location>
        <begin position="60"/>
        <end position="69"/>
    </location>
    <ligand>
        <name>substrate</name>
    </ligand>
</feature>
<feature type="binding site" evidence="1">
    <location>
        <position position="117"/>
    </location>
    <ligand>
        <name>substrate</name>
    </ligand>
</feature>
<feature type="binding site" evidence="1">
    <location>
        <begin position="170"/>
        <end position="180"/>
    </location>
    <ligand>
        <name>substrate</name>
    </ligand>
</feature>
<feature type="binding site" evidence="1">
    <location>
        <position position="193"/>
    </location>
    <ligand>
        <name>substrate</name>
    </ligand>
</feature>
<feature type="binding site" evidence="1">
    <location>
        <position position="194"/>
    </location>
    <ligand>
        <name>substrate</name>
    </ligand>
</feature>
<dbReference type="EC" id="4.1.1.23" evidence="1"/>
<dbReference type="EMBL" id="CP000099">
    <property type="protein sequence ID" value="AAZ69050.1"/>
    <property type="molecule type" value="Genomic_DNA"/>
</dbReference>
<dbReference type="SMR" id="Q46GE2"/>
<dbReference type="STRING" id="269797.Mbar_A0060"/>
<dbReference type="PaxDb" id="269797-Mbar_A0060"/>
<dbReference type="KEGG" id="mba:Mbar_A0060"/>
<dbReference type="eggNOG" id="arCOG00081">
    <property type="taxonomic scope" value="Archaea"/>
</dbReference>
<dbReference type="HOGENOM" id="CLU_067069_2_0_2"/>
<dbReference type="OrthoDB" id="94124at2157"/>
<dbReference type="UniPathway" id="UPA00070">
    <property type="reaction ID" value="UER00120"/>
</dbReference>
<dbReference type="GO" id="GO:0005829">
    <property type="term" value="C:cytosol"/>
    <property type="evidence" value="ECO:0007669"/>
    <property type="project" value="TreeGrafter"/>
</dbReference>
<dbReference type="GO" id="GO:0004590">
    <property type="term" value="F:orotidine-5'-phosphate decarboxylase activity"/>
    <property type="evidence" value="ECO:0007669"/>
    <property type="project" value="UniProtKB-UniRule"/>
</dbReference>
<dbReference type="GO" id="GO:0006207">
    <property type="term" value="P:'de novo' pyrimidine nucleobase biosynthetic process"/>
    <property type="evidence" value="ECO:0007669"/>
    <property type="project" value="InterPro"/>
</dbReference>
<dbReference type="GO" id="GO:0044205">
    <property type="term" value="P:'de novo' UMP biosynthetic process"/>
    <property type="evidence" value="ECO:0007669"/>
    <property type="project" value="UniProtKB-UniRule"/>
</dbReference>
<dbReference type="CDD" id="cd04725">
    <property type="entry name" value="OMP_decarboxylase_like"/>
    <property type="match status" value="1"/>
</dbReference>
<dbReference type="Gene3D" id="3.20.20.70">
    <property type="entry name" value="Aldolase class I"/>
    <property type="match status" value="1"/>
</dbReference>
<dbReference type="HAMAP" id="MF_01200_A">
    <property type="entry name" value="OMPdecase_type1_A"/>
    <property type="match status" value="1"/>
</dbReference>
<dbReference type="InterPro" id="IPR013785">
    <property type="entry name" value="Aldolase_TIM"/>
</dbReference>
<dbReference type="InterPro" id="IPR014732">
    <property type="entry name" value="OMPdecase"/>
</dbReference>
<dbReference type="InterPro" id="IPR047595">
    <property type="entry name" value="OMPdecase_arc"/>
</dbReference>
<dbReference type="InterPro" id="IPR018089">
    <property type="entry name" value="OMPdecase_AS"/>
</dbReference>
<dbReference type="InterPro" id="IPR001754">
    <property type="entry name" value="OMPdeCOase_dom"/>
</dbReference>
<dbReference type="InterPro" id="IPR011060">
    <property type="entry name" value="RibuloseP-bd_barrel"/>
</dbReference>
<dbReference type="NCBIfam" id="NF010386">
    <property type="entry name" value="PRK13813.1"/>
    <property type="match status" value="1"/>
</dbReference>
<dbReference type="NCBIfam" id="TIGR01740">
    <property type="entry name" value="pyrF"/>
    <property type="match status" value="1"/>
</dbReference>
<dbReference type="PANTHER" id="PTHR32119">
    <property type="entry name" value="OROTIDINE 5'-PHOSPHATE DECARBOXYLASE"/>
    <property type="match status" value="1"/>
</dbReference>
<dbReference type="PANTHER" id="PTHR32119:SF2">
    <property type="entry name" value="OROTIDINE 5'-PHOSPHATE DECARBOXYLASE"/>
    <property type="match status" value="1"/>
</dbReference>
<dbReference type="Pfam" id="PF00215">
    <property type="entry name" value="OMPdecase"/>
    <property type="match status" value="1"/>
</dbReference>
<dbReference type="SMART" id="SM00934">
    <property type="entry name" value="OMPdecase"/>
    <property type="match status" value="1"/>
</dbReference>
<dbReference type="SUPFAM" id="SSF51366">
    <property type="entry name" value="Ribulose-phoshate binding barrel"/>
    <property type="match status" value="1"/>
</dbReference>
<dbReference type="PROSITE" id="PS00156">
    <property type="entry name" value="OMPDECASE"/>
    <property type="match status" value="1"/>
</dbReference>
<proteinExistence type="inferred from homology"/>